<comment type="function">
    <text evidence="1">Part of the tripartite efflux system MacAB-TolC. MacA stimulates the ATPase activity of MacB by promoting the closed ATP-bound state of MacB, increases the capacity of MacB to bind macrolides such as erythromycin, and provides a physical link between MacB and TolC. Confers resistance against macrolides (By similarity).</text>
</comment>
<comment type="subunit">
    <text evidence="1">Homohexamer. Part of the tripartite efflux system MacAB-TolC, which is composed of an inner membrane transporter, MacB, a periplasmic membrane fusion protein, MacA, and an outer membrane component, TolC. The complex forms a large protein conduit and can translocate molecules across both the inner and outer membranes. MacA interacts with MacB and TolC (By similarity).</text>
</comment>
<comment type="subcellular location">
    <subcellularLocation>
        <location evidence="1">Cell inner membrane</location>
        <topology evidence="1">Single-pass membrane protein</topology>
        <orientation evidence="1">Periplasmic side</orientation>
    </subcellularLocation>
</comment>
<comment type="similarity">
    <text evidence="3">Belongs to the membrane fusion protein (MFP) (TC 8.A.1) family.</text>
</comment>
<feature type="chain" id="PRO_0000018697" description="Macrolide export protein MacA">
    <location>
        <begin position="1"/>
        <end position="371"/>
    </location>
</feature>
<feature type="topological domain" description="Cytoplasmic" evidence="2">
    <location>
        <begin position="1"/>
        <end position="10"/>
    </location>
</feature>
<feature type="transmembrane region" description="Helical" evidence="2">
    <location>
        <begin position="11"/>
        <end position="31"/>
    </location>
</feature>
<feature type="topological domain" description="Periplasmic" evidence="2">
    <location>
        <begin position="32"/>
        <end position="371"/>
    </location>
</feature>
<feature type="coiled-coil region" evidence="2">
    <location>
        <begin position="92"/>
        <end position="137"/>
    </location>
</feature>
<keyword id="KW-0046">Antibiotic resistance</keyword>
<keyword id="KW-0997">Cell inner membrane</keyword>
<keyword id="KW-1003">Cell membrane</keyword>
<keyword id="KW-0175">Coiled coil</keyword>
<keyword id="KW-0472">Membrane</keyword>
<keyword id="KW-1185">Reference proteome</keyword>
<keyword id="KW-0812">Transmembrane</keyword>
<keyword id="KW-1133">Transmembrane helix</keyword>
<keyword id="KW-0813">Transport</keyword>
<protein>
    <recommendedName>
        <fullName>Macrolide export protein MacA</fullName>
    </recommendedName>
</protein>
<accession>P64177</accession>
<accession>P58410</accession>
<gene>
    <name type="primary">macA</name>
    <name type="ordered locus">SF0838</name>
    <name type="ordered locus">S0878</name>
</gene>
<reference key="1">
    <citation type="journal article" date="2002" name="Nucleic Acids Res.">
        <title>Genome sequence of Shigella flexneri 2a: insights into pathogenicity through comparison with genomes of Escherichia coli K12 and O157.</title>
        <authorList>
            <person name="Jin Q."/>
            <person name="Yuan Z."/>
            <person name="Xu J."/>
            <person name="Wang Y."/>
            <person name="Shen Y."/>
            <person name="Lu W."/>
            <person name="Wang J."/>
            <person name="Liu H."/>
            <person name="Yang J."/>
            <person name="Yang F."/>
            <person name="Zhang X."/>
            <person name="Zhang J."/>
            <person name="Yang G."/>
            <person name="Wu H."/>
            <person name="Qu D."/>
            <person name="Dong J."/>
            <person name="Sun L."/>
            <person name="Xue Y."/>
            <person name="Zhao A."/>
            <person name="Gao Y."/>
            <person name="Zhu J."/>
            <person name="Kan B."/>
            <person name="Ding K."/>
            <person name="Chen S."/>
            <person name="Cheng H."/>
            <person name="Yao Z."/>
            <person name="He B."/>
            <person name="Chen R."/>
            <person name="Ma D."/>
            <person name="Qiang B."/>
            <person name="Wen Y."/>
            <person name="Hou Y."/>
            <person name="Yu J."/>
        </authorList>
    </citation>
    <scope>NUCLEOTIDE SEQUENCE [LARGE SCALE GENOMIC DNA]</scope>
    <source>
        <strain>301 / Serotype 2a</strain>
    </source>
</reference>
<reference key="2">
    <citation type="journal article" date="2003" name="Infect. Immun.">
        <title>Complete genome sequence and comparative genomics of Shigella flexneri serotype 2a strain 2457T.</title>
        <authorList>
            <person name="Wei J."/>
            <person name="Goldberg M.B."/>
            <person name="Burland V."/>
            <person name="Venkatesan M.M."/>
            <person name="Deng W."/>
            <person name="Fournier G."/>
            <person name="Mayhew G.F."/>
            <person name="Plunkett G. III"/>
            <person name="Rose D.J."/>
            <person name="Darling A."/>
            <person name="Mau B."/>
            <person name="Perna N.T."/>
            <person name="Payne S.M."/>
            <person name="Runyen-Janecky L.J."/>
            <person name="Zhou S."/>
            <person name="Schwartz D.C."/>
            <person name="Blattner F.R."/>
        </authorList>
    </citation>
    <scope>NUCLEOTIDE SEQUENCE [LARGE SCALE GENOMIC DNA]</scope>
    <source>
        <strain>ATCC 700930 / 2457T / Serotype 2a</strain>
    </source>
</reference>
<sequence length="371" mass="40639">MKKRKTVKKRYVIALVIVIAGLITLWRILNAPVPTYQTLIVRPGDLQQSVLATGKLDALRKVDVGAQVSGQLKTLSVAIGDKVKKDQLLGVIDPEQAENQIKEVEATLMELRAQRQQAEAELKLARVTYSRQQRLAQTQAVSLQDLDTAATEMAVKQAQIGTIDAQIKRNQASLDTAKTNLDYTRIVAPMAGEVTQITTLQGQTVIAAQQAPNILTLADMSTMLVKAQVSEADVIHLKPGQKAWFTVLGDPLTRYEGQIKDVLPTPEKVNDAIFYYARFEVPNPNGLLRLDMTAQVHIQLTDVKNVLTIPLSALGDPVGDNRYKVKLLRNGETREREVTIGARNDTDVEIVKGLEAGDEVVIGEAKPGAAQ</sequence>
<dbReference type="EMBL" id="AE005674">
    <property type="protein sequence ID" value="AAN42471.2"/>
    <property type="molecule type" value="Genomic_DNA"/>
</dbReference>
<dbReference type="EMBL" id="AE014073">
    <property type="protein sequence ID" value="AAP16343.1"/>
    <property type="molecule type" value="Genomic_DNA"/>
</dbReference>
<dbReference type="RefSeq" id="NP_706764.2">
    <property type="nucleotide sequence ID" value="NC_004337.2"/>
</dbReference>
<dbReference type="RefSeq" id="WP_000746446.1">
    <property type="nucleotide sequence ID" value="NZ_WPGW01000037.1"/>
</dbReference>
<dbReference type="SMR" id="P64177"/>
<dbReference type="STRING" id="198214.SF0838"/>
<dbReference type="PaxDb" id="198214-SF0838"/>
<dbReference type="GeneID" id="1023829"/>
<dbReference type="KEGG" id="sfl:SF0838"/>
<dbReference type="KEGG" id="sfx:S0878"/>
<dbReference type="PATRIC" id="fig|198214.7.peg.967"/>
<dbReference type="HOGENOM" id="CLU_018816_14_1_6"/>
<dbReference type="Proteomes" id="UP000001006">
    <property type="component" value="Chromosome"/>
</dbReference>
<dbReference type="Proteomes" id="UP000002673">
    <property type="component" value="Chromosome"/>
</dbReference>
<dbReference type="GO" id="GO:1990281">
    <property type="term" value="C:efflux pump complex"/>
    <property type="evidence" value="ECO:0007669"/>
    <property type="project" value="TreeGrafter"/>
</dbReference>
<dbReference type="GO" id="GO:0019898">
    <property type="term" value="C:extrinsic component of membrane"/>
    <property type="evidence" value="ECO:0007669"/>
    <property type="project" value="InterPro"/>
</dbReference>
<dbReference type="GO" id="GO:1990195">
    <property type="term" value="C:macrolide transmembrane transporter complex"/>
    <property type="evidence" value="ECO:0007669"/>
    <property type="project" value="InterPro"/>
</dbReference>
<dbReference type="GO" id="GO:0005886">
    <property type="term" value="C:plasma membrane"/>
    <property type="evidence" value="ECO:0007669"/>
    <property type="project" value="UniProtKB-SubCell"/>
</dbReference>
<dbReference type="GO" id="GO:0015562">
    <property type="term" value="F:efflux transmembrane transporter activity"/>
    <property type="evidence" value="ECO:0007669"/>
    <property type="project" value="TreeGrafter"/>
</dbReference>
<dbReference type="GO" id="GO:0046677">
    <property type="term" value="P:response to antibiotic"/>
    <property type="evidence" value="ECO:0007669"/>
    <property type="project" value="UniProtKB-KW"/>
</dbReference>
<dbReference type="GO" id="GO:1990961">
    <property type="term" value="P:xenobiotic detoxification by transmembrane export across the plasma membrane"/>
    <property type="evidence" value="ECO:0007669"/>
    <property type="project" value="InterPro"/>
</dbReference>
<dbReference type="FunFam" id="2.40.30.170:FF:000007">
    <property type="entry name" value="Macrolide transporter subunit MacA"/>
    <property type="match status" value="1"/>
</dbReference>
<dbReference type="FunFam" id="2.40.420.20:FF:000004">
    <property type="entry name" value="Macrolide transporter subunit MacA"/>
    <property type="match status" value="1"/>
</dbReference>
<dbReference type="Gene3D" id="2.40.30.170">
    <property type="match status" value="1"/>
</dbReference>
<dbReference type="Gene3D" id="2.40.420.20">
    <property type="match status" value="1"/>
</dbReference>
<dbReference type="Gene3D" id="2.40.50.100">
    <property type="match status" value="1"/>
</dbReference>
<dbReference type="Gene3D" id="6.10.140.1990">
    <property type="match status" value="1"/>
</dbReference>
<dbReference type="InterPro" id="IPR032317">
    <property type="entry name" value="CusB_D23"/>
</dbReference>
<dbReference type="InterPro" id="IPR030190">
    <property type="entry name" value="MacA_alpha-hairpin_sf"/>
</dbReference>
<dbReference type="InterPro" id="IPR006143">
    <property type="entry name" value="RND_pump_MFP"/>
</dbReference>
<dbReference type="NCBIfam" id="NF008606">
    <property type="entry name" value="PRK11578.1"/>
    <property type="match status" value="1"/>
</dbReference>
<dbReference type="NCBIfam" id="TIGR01730">
    <property type="entry name" value="RND_mfp"/>
    <property type="match status" value="1"/>
</dbReference>
<dbReference type="PANTHER" id="PTHR30469:SF34">
    <property type="entry name" value="MACROLIDE EXPORT PROTEIN MACA"/>
    <property type="match status" value="1"/>
</dbReference>
<dbReference type="PANTHER" id="PTHR30469">
    <property type="entry name" value="MULTIDRUG RESISTANCE PROTEIN MDTA"/>
    <property type="match status" value="1"/>
</dbReference>
<dbReference type="Pfam" id="PF16576">
    <property type="entry name" value="HlyD_D23"/>
    <property type="match status" value="1"/>
</dbReference>
<dbReference type="SUPFAM" id="SSF111369">
    <property type="entry name" value="HlyD-like secretion proteins"/>
    <property type="match status" value="1"/>
</dbReference>
<organism>
    <name type="scientific">Shigella flexneri</name>
    <dbReference type="NCBI Taxonomy" id="623"/>
    <lineage>
        <taxon>Bacteria</taxon>
        <taxon>Pseudomonadati</taxon>
        <taxon>Pseudomonadota</taxon>
        <taxon>Gammaproteobacteria</taxon>
        <taxon>Enterobacterales</taxon>
        <taxon>Enterobacteriaceae</taxon>
        <taxon>Shigella</taxon>
    </lineage>
</organism>
<name>MACA_SHIFL</name>
<proteinExistence type="inferred from homology"/>
<evidence type="ECO:0000250" key="1"/>
<evidence type="ECO:0000255" key="2"/>
<evidence type="ECO:0000305" key="3"/>